<protein>
    <recommendedName>
        <fullName evidence="1">Uridylate kinase</fullName>
        <shortName evidence="1">UK</shortName>
        <ecNumber evidence="1">2.7.4.22</ecNumber>
    </recommendedName>
    <alternativeName>
        <fullName evidence="1">Uridine monophosphate kinase</fullName>
        <shortName evidence="1">UMP kinase</shortName>
        <shortName evidence="1">UMPK</shortName>
    </alternativeName>
</protein>
<accession>Q12VQ2</accession>
<comment type="function">
    <text evidence="1">Catalyzes the reversible phosphorylation of UMP to UDP.</text>
</comment>
<comment type="catalytic activity">
    <reaction evidence="1">
        <text>UMP + ATP = UDP + ADP</text>
        <dbReference type="Rhea" id="RHEA:24400"/>
        <dbReference type="ChEBI" id="CHEBI:30616"/>
        <dbReference type="ChEBI" id="CHEBI:57865"/>
        <dbReference type="ChEBI" id="CHEBI:58223"/>
        <dbReference type="ChEBI" id="CHEBI:456216"/>
        <dbReference type="EC" id="2.7.4.22"/>
    </reaction>
</comment>
<comment type="activity regulation">
    <text evidence="1">Inhibited by UTP.</text>
</comment>
<comment type="pathway">
    <text evidence="1">Pyrimidine metabolism; CTP biosynthesis via de novo pathway; UDP from UMP (UMPK route): step 1/1.</text>
</comment>
<comment type="subunit">
    <text evidence="1">Homohexamer.</text>
</comment>
<comment type="subcellular location">
    <subcellularLocation>
        <location evidence="1">Cytoplasm</location>
    </subcellularLocation>
</comment>
<comment type="similarity">
    <text evidence="1">Belongs to the UMP kinase family.</text>
</comment>
<name>PYRH_METBU</name>
<sequence>MLIVLSVGGSILAKNLDPKHFSAYASALKELARKHQIVVVTGGGVAARNYIDVARGVGANEVVCDFIGIDITRLNAQLLIAALGNTAHPEPPTTYKEAESALASGKIVVMGGVIPGQTTDAVAAILAEYLNADMMVIATSVDGVYSSDPREDPNAKKFDVMTAKELVGIVISTEMKAGSKSPVDPLASKIIERCNIDTIIMDGTDPQDVLEVVLQEAVKTDKVTGVRLGTRIIG</sequence>
<keyword id="KW-0067">ATP-binding</keyword>
<keyword id="KW-0963">Cytoplasm</keyword>
<keyword id="KW-0418">Kinase</keyword>
<keyword id="KW-0547">Nucleotide-binding</keyword>
<keyword id="KW-0665">Pyrimidine biosynthesis</keyword>
<keyword id="KW-0808">Transferase</keyword>
<organism>
    <name type="scientific">Methanococcoides burtonii (strain DSM 6242 / NBRC 107633 / OCM 468 / ACE-M)</name>
    <dbReference type="NCBI Taxonomy" id="259564"/>
    <lineage>
        <taxon>Archaea</taxon>
        <taxon>Methanobacteriati</taxon>
        <taxon>Methanobacteriota</taxon>
        <taxon>Stenosarchaea group</taxon>
        <taxon>Methanomicrobia</taxon>
        <taxon>Methanosarcinales</taxon>
        <taxon>Methanosarcinaceae</taxon>
        <taxon>Methanococcoides</taxon>
    </lineage>
</organism>
<gene>
    <name evidence="1" type="primary">pyrH</name>
    <name type="ordered locus">Mbur_1569</name>
</gene>
<reference key="1">
    <citation type="journal article" date="2009" name="ISME J.">
        <title>The genome sequence of the psychrophilic archaeon, Methanococcoides burtonii: the role of genome evolution in cold adaptation.</title>
        <authorList>
            <person name="Allen M.A."/>
            <person name="Lauro F.M."/>
            <person name="Williams T.J."/>
            <person name="Burg D."/>
            <person name="Siddiqui K.S."/>
            <person name="De Francisci D."/>
            <person name="Chong K.W."/>
            <person name="Pilak O."/>
            <person name="Chew H.H."/>
            <person name="De Maere M.Z."/>
            <person name="Ting L."/>
            <person name="Katrib M."/>
            <person name="Ng C."/>
            <person name="Sowers K.R."/>
            <person name="Galperin M.Y."/>
            <person name="Anderson I.J."/>
            <person name="Ivanova N."/>
            <person name="Dalin E."/>
            <person name="Martinez M."/>
            <person name="Lapidus A."/>
            <person name="Hauser L."/>
            <person name="Land M."/>
            <person name="Thomas T."/>
            <person name="Cavicchioli R."/>
        </authorList>
    </citation>
    <scope>NUCLEOTIDE SEQUENCE [LARGE SCALE GENOMIC DNA]</scope>
    <source>
        <strain>DSM 6242 / NBRC 107633 / OCM 468 / ACE-M</strain>
    </source>
</reference>
<proteinExistence type="inferred from homology"/>
<dbReference type="EC" id="2.7.4.22" evidence="1"/>
<dbReference type="EMBL" id="CP000300">
    <property type="protein sequence ID" value="ABE52474.1"/>
    <property type="molecule type" value="Genomic_DNA"/>
</dbReference>
<dbReference type="RefSeq" id="WP_011499618.1">
    <property type="nucleotide sequence ID" value="NC_007955.1"/>
</dbReference>
<dbReference type="SMR" id="Q12VQ2"/>
<dbReference type="STRING" id="259564.Mbur_1569"/>
<dbReference type="GeneID" id="3997805"/>
<dbReference type="KEGG" id="mbu:Mbur_1569"/>
<dbReference type="HOGENOM" id="CLU_079546_0_0_2"/>
<dbReference type="OrthoDB" id="372251at2157"/>
<dbReference type="UniPathway" id="UPA00159">
    <property type="reaction ID" value="UER00275"/>
</dbReference>
<dbReference type="Proteomes" id="UP000001979">
    <property type="component" value="Chromosome"/>
</dbReference>
<dbReference type="GO" id="GO:0005737">
    <property type="term" value="C:cytoplasm"/>
    <property type="evidence" value="ECO:0007669"/>
    <property type="project" value="UniProtKB-SubCell"/>
</dbReference>
<dbReference type="GO" id="GO:0005524">
    <property type="term" value="F:ATP binding"/>
    <property type="evidence" value="ECO:0007669"/>
    <property type="project" value="UniProtKB-KW"/>
</dbReference>
<dbReference type="GO" id="GO:0033862">
    <property type="term" value="F:UMP kinase activity"/>
    <property type="evidence" value="ECO:0007669"/>
    <property type="project" value="UniProtKB-EC"/>
</dbReference>
<dbReference type="GO" id="GO:0044210">
    <property type="term" value="P:'de novo' CTP biosynthetic process"/>
    <property type="evidence" value="ECO:0007669"/>
    <property type="project" value="UniProtKB-UniRule"/>
</dbReference>
<dbReference type="GO" id="GO:0006225">
    <property type="term" value="P:UDP biosynthetic process"/>
    <property type="evidence" value="ECO:0007669"/>
    <property type="project" value="TreeGrafter"/>
</dbReference>
<dbReference type="CDD" id="cd04253">
    <property type="entry name" value="AAK_UMPK-PyrH-Pf"/>
    <property type="match status" value="1"/>
</dbReference>
<dbReference type="FunFam" id="3.40.1160.10:FF:000030">
    <property type="entry name" value="Uridylate kinase"/>
    <property type="match status" value="1"/>
</dbReference>
<dbReference type="Gene3D" id="3.40.1160.10">
    <property type="entry name" value="Acetylglutamate kinase-like"/>
    <property type="match status" value="1"/>
</dbReference>
<dbReference type="HAMAP" id="MF_01220_A">
    <property type="entry name" value="PyrH_A"/>
    <property type="match status" value="1"/>
</dbReference>
<dbReference type="InterPro" id="IPR036393">
    <property type="entry name" value="AceGlu_kinase-like_sf"/>
</dbReference>
<dbReference type="InterPro" id="IPR001048">
    <property type="entry name" value="Asp/Glu/Uridylate_kinase"/>
</dbReference>
<dbReference type="InterPro" id="IPR011817">
    <property type="entry name" value="Uridylate_kinase"/>
</dbReference>
<dbReference type="InterPro" id="IPR011818">
    <property type="entry name" value="Uridylate_kinase_arch/spir"/>
</dbReference>
<dbReference type="NCBIfam" id="TIGR02076">
    <property type="entry name" value="pyrH_arch"/>
    <property type="match status" value="1"/>
</dbReference>
<dbReference type="PANTHER" id="PTHR42833">
    <property type="entry name" value="URIDYLATE KINASE"/>
    <property type="match status" value="1"/>
</dbReference>
<dbReference type="PANTHER" id="PTHR42833:SF4">
    <property type="entry name" value="URIDYLATE KINASE PUMPKIN, CHLOROPLASTIC"/>
    <property type="match status" value="1"/>
</dbReference>
<dbReference type="Pfam" id="PF00696">
    <property type="entry name" value="AA_kinase"/>
    <property type="match status" value="1"/>
</dbReference>
<dbReference type="PIRSF" id="PIRSF005650">
    <property type="entry name" value="Uridylate_kin"/>
    <property type="match status" value="1"/>
</dbReference>
<dbReference type="SUPFAM" id="SSF53633">
    <property type="entry name" value="Carbamate kinase-like"/>
    <property type="match status" value="1"/>
</dbReference>
<feature type="chain" id="PRO_1000053951" description="Uridylate kinase">
    <location>
        <begin position="1"/>
        <end position="234"/>
    </location>
</feature>
<feature type="binding site" evidence="1">
    <location>
        <begin position="9"/>
        <end position="10"/>
    </location>
    <ligand>
        <name>ATP</name>
        <dbReference type="ChEBI" id="CHEBI:30616"/>
    </ligand>
</feature>
<feature type="binding site" evidence="1">
    <location>
        <position position="43"/>
    </location>
    <ligand>
        <name>UMP</name>
        <dbReference type="ChEBI" id="CHEBI:57865"/>
    </ligand>
</feature>
<feature type="binding site" evidence="1">
    <location>
        <position position="44"/>
    </location>
    <ligand>
        <name>ATP</name>
        <dbReference type="ChEBI" id="CHEBI:30616"/>
    </ligand>
</feature>
<feature type="binding site" evidence="1">
    <location>
        <position position="48"/>
    </location>
    <ligand>
        <name>ATP</name>
        <dbReference type="ChEBI" id="CHEBI:30616"/>
    </ligand>
</feature>
<feature type="binding site" evidence="1">
    <location>
        <position position="65"/>
    </location>
    <ligand>
        <name>UMP</name>
        <dbReference type="ChEBI" id="CHEBI:57865"/>
    </ligand>
</feature>
<feature type="binding site" evidence="1">
    <location>
        <begin position="113"/>
        <end position="119"/>
    </location>
    <ligand>
        <name>UMP</name>
        <dbReference type="ChEBI" id="CHEBI:57865"/>
    </ligand>
</feature>
<feature type="binding site" evidence="1">
    <location>
        <position position="139"/>
    </location>
    <ligand>
        <name>ATP</name>
        <dbReference type="ChEBI" id="CHEBI:30616"/>
    </ligand>
</feature>
<feature type="binding site" evidence="1">
    <location>
        <position position="145"/>
    </location>
    <ligand>
        <name>ATP</name>
        <dbReference type="ChEBI" id="CHEBI:30616"/>
    </ligand>
</feature>
<feature type="binding site" evidence="1">
    <location>
        <position position="148"/>
    </location>
    <ligand>
        <name>ATP</name>
        <dbReference type="ChEBI" id="CHEBI:30616"/>
    </ligand>
</feature>
<evidence type="ECO:0000255" key="1">
    <source>
        <dbReference type="HAMAP-Rule" id="MF_01220"/>
    </source>
</evidence>